<comment type="function">
    <text evidence="1">Specifically methylates the N7 position of guanine in position 527 of 16S rRNA.</text>
</comment>
<comment type="catalytic activity">
    <reaction evidence="1">
        <text>guanosine(527) in 16S rRNA + S-adenosyl-L-methionine = N(7)-methylguanosine(527) in 16S rRNA + S-adenosyl-L-homocysteine</text>
        <dbReference type="Rhea" id="RHEA:42732"/>
        <dbReference type="Rhea" id="RHEA-COMP:10209"/>
        <dbReference type="Rhea" id="RHEA-COMP:10210"/>
        <dbReference type="ChEBI" id="CHEBI:57856"/>
        <dbReference type="ChEBI" id="CHEBI:59789"/>
        <dbReference type="ChEBI" id="CHEBI:74269"/>
        <dbReference type="ChEBI" id="CHEBI:74480"/>
        <dbReference type="EC" id="2.1.1.170"/>
    </reaction>
</comment>
<comment type="subcellular location">
    <subcellularLocation>
        <location evidence="1">Cytoplasm</location>
    </subcellularLocation>
</comment>
<comment type="similarity">
    <text evidence="1">Belongs to the methyltransferase superfamily. RNA methyltransferase RsmG family.</text>
</comment>
<name>RSMG_METS4</name>
<gene>
    <name evidence="1" type="primary">rsmG</name>
    <name type="ordered locus">M446_1409</name>
</gene>
<keyword id="KW-0963">Cytoplasm</keyword>
<keyword id="KW-0489">Methyltransferase</keyword>
<keyword id="KW-0698">rRNA processing</keyword>
<keyword id="KW-0949">S-adenosyl-L-methionine</keyword>
<keyword id="KW-0808">Transferase</keyword>
<proteinExistence type="inferred from homology"/>
<feature type="chain" id="PRO_0000342926" description="Ribosomal RNA small subunit methyltransferase G">
    <location>
        <begin position="1"/>
        <end position="212"/>
    </location>
</feature>
<feature type="binding site" evidence="1">
    <location>
        <position position="73"/>
    </location>
    <ligand>
        <name>S-adenosyl-L-methionine</name>
        <dbReference type="ChEBI" id="CHEBI:59789"/>
    </ligand>
</feature>
<feature type="binding site" evidence="1">
    <location>
        <begin position="127"/>
        <end position="128"/>
    </location>
    <ligand>
        <name>S-adenosyl-L-methionine</name>
        <dbReference type="ChEBI" id="CHEBI:59789"/>
    </ligand>
</feature>
<feature type="binding site" evidence="1">
    <location>
        <position position="143"/>
    </location>
    <ligand>
        <name>S-adenosyl-L-methionine</name>
        <dbReference type="ChEBI" id="CHEBI:59789"/>
    </ligand>
</feature>
<accession>B0UJI7</accession>
<dbReference type="EC" id="2.1.1.170" evidence="1"/>
<dbReference type="EMBL" id="CP000943">
    <property type="protein sequence ID" value="ACA15925.1"/>
    <property type="molecule type" value="Genomic_DNA"/>
</dbReference>
<dbReference type="RefSeq" id="WP_012331342.1">
    <property type="nucleotide sequence ID" value="NC_010511.1"/>
</dbReference>
<dbReference type="SMR" id="B0UJI7"/>
<dbReference type="STRING" id="426117.M446_1409"/>
<dbReference type="KEGG" id="met:M446_1409"/>
<dbReference type="eggNOG" id="COG0357">
    <property type="taxonomic scope" value="Bacteria"/>
</dbReference>
<dbReference type="HOGENOM" id="CLU_065341_1_0_5"/>
<dbReference type="GO" id="GO:0005829">
    <property type="term" value="C:cytosol"/>
    <property type="evidence" value="ECO:0007669"/>
    <property type="project" value="TreeGrafter"/>
</dbReference>
<dbReference type="GO" id="GO:0070043">
    <property type="term" value="F:rRNA (guanine-N7-)-methyltransferase activity"/>
    <property type="evidence" value="ECO:0007669"/>
    <property type="project" value="UniProtKB-UniRule"/>
</dbReference>
<dbReference type="Gene3D" id="3.40.50.150">
    <property type="entry name" value="Vaccinia Virus protein VP39"/>
    <property type="match status" value="1"/>
</dbReference>
<dbReference type="HAMAP" id="MF_00074">
    <property type="entry name" value="16SrRNA_methyltr_G"/>
    <property type="match status" value="1"/>
</dbReference>
<dbReference type="InterPro" id="IPR003682">
    <property type="entry name" value="rRNA_ssu_MeTfrase_G"/>
</dbReference>
<dbReference type="InterPro" id="IPR029063">
    <property type="entry name" value="SAM-dependent_MTases_sf"/>
</dbReference>
<dbReference type="NCBIfam" id="TIGR00138">
    <property type="entry name" value="rsmG_gidB"/>
    <property type="match status" value="1"/>
</dbReference>
<dbReference type="PANTHER" id="PTHR31760">
    <property type="entry name" value="S-ADENOSYL-L-METHIONINE-DEPENDENT METHYLTRANSFERASES SUPERFAMILY PROTEIN"/>
    <property type="match status" value="1"/>
</dbReference>
<dbReference type="PANTHER" id="PTHR31760:SF0">
    <property type="entry name" value="S-ADENOSYL-L-METHIONINE-DEPENDENT METHYLTRANSFERASES SUPERFAMILY PROTEIN"/>
    <property type="match status" value="1"/>
</dbReference>
<dbReference type="Pfam" id="PF02527">
    <property type="entry name" value="GidB"/>
    <property type="match status" value="1"/>
</dbReference>
<dbReference type="PIRSF" id="PIRSF003078">
    <property type="entry name" value="GidB"/>
    <property type="match status" value="1"/>
</dbReference>
<dbReference type="SUPFAM" id="SSF53335">
    <property type="entry name" value="S-adenosyl-L-methionine-dependent methyltransferases"/>
    <property type="match status" value="1"/>
</dbReference>
<reference key="1">
    <citation type="submission" date="2008-02" db="EMBL/GenBank/DDBJ databases">
        <title>Complete sequence of chromosome of Methylobacterium sp. 4-46.</title>
        <authorList>
            <consortium name="US DOE Joint Genome Institute"/>
            <person name="Copeland A."/>
            <person name="Lucas S."/>
            <person name="Lapidus A."/>
            <person name="Glavina del Rio T."/>
            <person name="Dalin E."/>
            <person name="Tice H."/>
            <person name="Bruce D."/>
            <person name="Goodwin L."/>
            <person name="Pitluck S."/>
            <person name="Chertkov O."/>
            <person name="Brettin T."/>
            <person name="Detter J.C."/>
            <person name="Han C."/>
            <person name="Kuske C.R."/>
            <person name="Schmutz J."/>
            <person name="Larimer F."/>
            <person name="Land M."/>
            <person name="Hauser L."/>
            <person name="Kyrpides N."/>
            <person name="Ivanova N."/>
            <person name="Marx C.J."/>
            <person name="Richardson P."/>
        </authorList>
    </citation>
    <scope>NUCLEOTIDE SEQUENCE [LARGE SCALE GENOMIC DNA]</scope>
    <source>
        <strain>4-46</strain>
    </source>
</reference>
<evidence type="ECO:0000255" key="1">
    <source>
        <dbReference type="HAMAP-Rule" id="MF_00074"/>
    </source>
</evidence>
<protein>
    <recommendedName>
        <fullName evidence="1">Ribosomal RNA small subunit methyltransferase G</fullName>
        <ecNumber evidence="1">2.1.1.170</ecNumber>
    </recommendedName>
    <alternativeName>
        <fullName evidence="1">16S rRNA 7-methylguanosine methyltransferase</fullName>
        <shortName evidence="1">16S rRNA m7G methyltransferase</shortName>
    </alternativeName>
</protein>
<organism>
    <name type="scientific">Methylobacterium sp. (strain 4-46)</name>
    <dbReference type="NCBI Taxonomy" id="426117"/>
    <lineage>
        <taxon>Bacteria</taxon>
        <taxon>Pseudomonadati</taxon>
        <taxon>Pseudomonadota</taxon>
        <taxon>Alphaproteobacteria</taxon>
        <taxon>Hyphomicrobiales</taxon>
        <taxon>Methylobacteriaceae</taxon>
        <taxon>Methylobacterium</taxon>
    </lineage>
</organism>
<sequence length="212" mass="22662">MVPSDRDRVLAEAGVSRETAAALDLYVAQLTRWQAIKNLVGPATLPDVWTRHIADSLQLLDAAPQARTWLDLGSGAGIPGLILAIAGVRNRPDLRVDLVESNARKGAFLQETARLTGAPARIHVARIERVVAGFRGVDVVCARALAPLPQLIAWTAPLLKSGTIGLFPKGREAQSELTAAREKWTFVADVIPSRTDSSAGIVRISSLSDPLP</sequence>